<accession>A6SUP6</accession>
<name>DTD_JANMA</name>
<proteinExistence type="inferred from homology"/>
<organism>
    <name type="scientific">Janthinobacterium sp. (strain Marseille)</name>
    <name type="common">Minibacterium massiliensis</name>
    <dbReference type="NCBI Taxonomy" id="375286"/>
    <lineage>
        <taxon>Bacteria</taxon>
        <taxon>Pseudomonadati</taxon>
        <taxon>Pseudomonadota</taxon>
        <taxon>Betaproteobacteria</taxon>
        <taxon>Burkholderiales</taxon>
        <taxon>Oxalobacteraceae</taxon>
        <taxon>Janthinobacterium</taxon>
    </lineage>
</organism>
<comment type="function">
    <text evidence="1">An aminoacyl-tRNA editing enzyme that deacylates mischarged D-aminoacyl-tRNAs. Also deacylates mischarged glycyl-tRNA(Ala), protecting cells against glycine mischarging by AlaRS. Acts via tRNA-based rather than protein-based catalysis; rejects L-amino acids rather than detecting D-amino acids in the active site. By recycling D-aminoacyl-tRNA to D-amino acids and free tRNA molecules, this enzyme counteracts the toxicity associated with the formation of D-aminoacyl-tRNA entities in vivo and helps enforce protein L-homochirality.</text>
</comment>
<comment type="catalytic activity">
    <reaction evidence="1">
        <text>glycyl-tRNA(Ala) + H2O = tRNA(Ala) + glycine + H(+)</text>
        <dbReference type="Rhea" id="RHEA:53744"/>
        <dbReference type="Rhea" id="RHEA-COMP:9657"/>
        <dbReference type="Rhea" id="RHEA-COMP:13640"/>
        <dbReference type="ChEBI" id="CHEBI:15377"/>
        <dbReference type="ChEBI" id="CHEBI:15378"/>
        <dbReference type="ChEBI" id="CHEBI:57305"/>
        <dbReference type="ChEBI" id="CHEBI:78442"/>
        <dbReference type="ChEBI" id="CHEBI:78522"/>
        <dbReference type="EC" id="3.1.1.96"/>
    </reaction>
</comment>
<comment type="catalytic activity">
    <reaction evidence="1">
        <text>a D-aminoacyl-tRNA + H2O = a tRNA + a D-alpha-amino acid + H(+)</text>
        <dbReference type="Rhea" id="RHEA:13953"/>
        <dbReference type="Rhea" id="RHEA-COMP:10123"/>
        <dbReference type="Rhea" id="RHEA-COMP:10124"/>
        <dbReference type="ChEBI" id="CHEBI:15377"/>
        <dbReference type="ChEBI" id="CHEBI:15378"/>
        <dbReference type="ChEBI" id="CHEBI:59871"/>
        <dbReference type="ChEBI" id="CHEBI:78442"/>
        <dbReference type="ChEBI" id="CHEBI:79333"/>
        <dbReference type="EC" id="3.1.1.96"/>
    </reaction>
</comment>
<comment type="subunit">
    <text evidence="1">Homodimer.</text>
</comment>
<comment type="subcellular location">
    <subcellularLocation>
        <location evidence="1">Cytoplasm</location>
    </subcellularLocation>
</comment>
<comment type="domain">
    <text evidence="1">A Gly-cisPro motif from one monomer fits into the active site of the other monomer to allow specific chiral rejection of L-amino acids.</text>
</comment>
<comment type="similarity">
    <text evidence="1">Belongs to the DTD family.</text>
</comment>
<evidence type="ECO:0000255" key="1">
    <source>
        <dbReference type="HAMAP-Rule" id="MF_00518"/>
    </source>
</evidence>
<gene>
    <name evidence="1" type="primary">dtd</name>
    <name type="ordered locus">mma_0303</name>
</gene>
<feature type="chain" id="PRO_1000050840" description="D-aminoacyl-tRNA deacylase">
    <location>
        <begin position="1"/>
        <end position="149"/>
    </location>
</feature>
<feature type="short sequence motif" description="Gly-cisPro motif, important for rejection of L-amino acids" evidence="1">
    <location>
        <begin position="137"/>
        <end position="138"/>
    </location>
</feature>
<dbReference type="EC" id="3.1.1.96" evidence="1"/>
<dbReference type="EMBL" id="CP000269">
    <property type="protein sequence ID" value="ABR89850.1"/>
    <property type="molecule type" value="Genomic_DNA"/>
</dbReference>
<dbReference type="RefSeq" id="WP_012078168.1">
    <property type="nucleotide sequence ID" value="NC_009659.1"/>
</dbReference>
<dbReference type="SMR" id="A6SUP6"/>
<dbReference type="STRING" id="375286.mma_0303"/>
<dbReference type="KEGG" id="mms:mma_0303"/>
<dbReference type="eggNOG" id="COG1490">
    <property type="taxonomic scope" value="Bacteria"/>
</dbReference>
<dbReference type="HOGENOM" id="CLU_076901_1_1_4"/>
<dbReference type="OrthoDB" id="9801395at2"/>
<dbReference type="Proteomes" id="UP000006388">
    <property type="component" value="Chromosome"/>
</dbReference>
<dbReference type="GO" id="GO:0005737">
    <property type="term" value="C:cytoplasm"/>
    <property type="evidence" value="ECO:0007669"/>
    <property type="project" value="UniProtKB-SubCell"/>
</dbReference>
<dbReference type="GO" id="GO:0051500">
    <property type="term" value="F:D-tyrosyl-tRNA(Tyr) deacylase activity"/>
    <property type="evidence" value="ECO:0007669"/>
    <property type="project" value="TreeGrafter"/>
</dbReference>
<dbReference type="GO" id="GO:0106026">
    <property type="term" value="F:Gly-tRNA(Ala) deacylase activity"/>
    <property type="evidence" value="ECO:0007669"/>
    <property type="project" value="UniProtKB-UniRule"/>
</dbReference>
<dbReference type="GO" id="GO:0043908">
    <property type="term" value="F:Ser(Gly)-tRNA(Ala) hydrolase activity"/>
    <property type="evidence" value="ECO:0007669"/>
    <property type="project" value="UniProtKB-UniRule"/>
</dbReference>
<dbReference type="GO" id="GO:0000049">
    <property type="term" value="F:tRNA binding"/>
    <property type="evidence" value="ECO:0007669"/>
    <property type="project" value="UniProtKB-UniRule"/>
</dbReference>
<dbReference type="GO" id="GO:0019478">
    <property type="term" value="P:D-amino acid catabolic process"/>
    <property type="evidence" value="ECO:0007669"/>
    <property type="project" value="UniProtKB-UniRule"/>
</dbReference>
<dbReference type="CDD" id="cd00563">
    <property type="entry name" value="Dtyr_deacylase"/>
    <property type="match status" value="1"/>
</dbReference>
<dbReference type="FunFam" id="3.50.80.10:FF:000001">
    <property type="entry name" value="D-aminoacyl-tRNA deacylase"/>
    <property type="match status" value="1"/>
</dbReference>
<dbReference type="Gene3D" id="3.50.80.10">
    <property type="entry name" value="D-tyrosyl-tRNA(Tyr) deacylase"/>
    <property type="match status" value="1"/>
</dbReference>
<dbReference type="HAMAP" id="MF_00518">
    <property type="entry name" value="Deacylase_Dtd"/>
    <property type="match status" value="1"/>
</dbReference>
<dbReference type="InterPro" id="IPR003732">
    <property type="entry name" value="Daa-tRNA_deacyls_DTD"/>
</dbReference>
<dbReference type="InterPro" id="IPR023509">
    <property type="entry name" value="DTD-like_sf"/>
</dbReference>
<dbReference type="NCBIfam" id="TIGR00256">
    <property type="entry name" value="D-aminoacyl-tRNA deacylase"/>
    <property type="match status" value="1"/>
</dbReference>
<dbReference type="PANTHER" id="PTHR10472:SF5">
    <property type="entry name" value="D-AMINOACYL-TRNA DEACYLASE 1"/>
    <property type="match status" value="1"/>
</dbReference>
<dbReference type="PANTHER" id="PTHR10472">
    <property type="entry name" value="D-TYROSYL-TRNA TYR DEACYLASE"/>
    <property type="match status" value="1"/>
</dbReference>
<dbReference type="Pfam" id="PF02580">
    <property type="entry name" value="Tyr_Deacylase"/>
    <property type="match status" value="1"/>
</dbReference>
<dbReference type="SUPFAM" id="SSF69500">
    <property type="entry name" value="DTD-like"/>
    <property type="match status" value="1"/>
</dbReference>
<keyword id="KW-0963">Cytoplasm</keyword>
<keyword id="KW-0378">Hydrolase</keyword>
<keyword id="KW-0694">RNA-binding</keyword>
<keyword id="KW-0820">tRNA-binding</keyword>
<sequence length="149" mass="15680">MIALLQRVAHASVVVDGATVGAIDAGLMVLLCAERGDTEKEADALLAKLLSYRVFSDAAGKMNLSVVDTAGGVLLVPQFTLAADTRSGTRPSFTPAAAPDVARALFNYFVMQARSRHADIATGEFGADMKVSLTNDGPVTFWLQVKPVV</sequence>
<reference key="1">
    <citation type="journal article" date="2007" name="PLoS Genet.">
        <title>Genome analysis of Minibacterium massiliensis highlights the convergent evolution of water-living bacteria.</title>
        <authorList>
            <person name="Audic S."/>
            <person name="Robert C."/>
            <person name="Campagna B."/>
            <person name="Parinello H."/>
            <person name="Claverie J.-M."/>
            <person name="Raoult D."/>
            <person name="Drancourt M."/>
        </authorList>
    </citation>
    <scope>NUCLEOTIDE SEQUENCE [LARGE SCALE GENOMIC DNA]</scope>
    <source>
        <strain>Marseille</strain>
    </source>
</reference>
<protein>
    <recommendedName>
        <fullName evidence="1">D-aminoacyl-tRNA deacylase</fullName>
        <shortName evidence="1">DTD</shortName>
        <ecNumber evidence="1">3.1.1.96</ecNumber>
    </recommendedName>
    <alternativeName>
        <fullName evidence="1">Gly-tRNA(Ala) deacylase</fullName>
    </alternativeName>
</protein>